<name>MPA53_PHAAQ</name>
<sequence length="294" mass="30345">MAVQKYTVALFLAMALVAGPAASYAADAGTPPTPATPAVPGAAAGKATTHEQKLIEDINAAFKWWPASAPPADKYKTFETAFSKANIAGASTKGLDAAYSVVYNTAAGATPEAKYDSFVTALTEALRIMAGTLEVHAVKPATEEEVPSAKILRANSRSSTRSSRFKIAATVATPLSHSTAANSAPANDKFTVFEGAFNKAIKERHGGPTETYKFIPSLEAAVKQAYGATVARAPEVKYAVFEAGLTKAITAMSEAQKVAKPVRLSPQPPQVLPLAAGGAATVAAASDSRGGYKV</sequence>
<accession>P56166</accession>
<feature type="signal peptide" evidence="1">
    <location>
        <begin position="1"/>
        <end position="25"/>
    </location>
</feature>
<feature type="chain" id="PRO_0000021741" description="Major pollen allergen Pha a 5.3">
    <location>
        <begin position="26"/>
        <end position="294"/>
    </location>
</feature>
<proteinExistence type="evidence at protein level"/>
<reference key="1">
    <citation type="journal article" date="1995" name="Clin. Exp. Allergy">
        <title>Cloning, sequencing and expression in Escherichia coli of Pha a 1 and four isoforms of Pha a 5, the major allergens of canary grass pollen.</title>
        <authorList>
            <person name="Suphioglu C."/>
            <person name="Singh M.B."/>
        </authorList>
    </citation>
    <scope>NUCLEOTIDE SEQUENCE</scope>
    <source>
        <tissue>Pollen</tissue>
    </source>
</reference>
<dbReference type="SMR" id="P56166"/>
<dbReference type="Allergome" id="548">
    <property type="allergen name" value="Pha a 5"/>
</dbReference>
<dbReference type="CDD" id="cd12805">
    <property type="entry name" value="Allergen_V_VI"/>
    <property type="match status" value="1"/>
</dbReference>
<dbReference type="Gene3D" id="1.20.120.320">
    <property type="entry name" value="Group V grass pollen allergen"/>
    <property type="match status" value="2"/>
</dbReference>
<dbReference type="InterPro" id="IPR002914">
    <property type="entry name" value="Poa_pIX/Phl_pVI"/>
</dbReference>
<dbReference type="InterPro" id="IPR035506">
    <property type="entry name" value="Pollen_allergen/Os"/>
</dbReference>
<dbReference type="Pfam" id="PF01620">
    <property type="entry name" value="Pollen_allerg_2"/>
    <property type="match status" value="1"/>
</dbReference>
<dbReference type="PRINTS" id="PR00833">
    <property type="entry name" value="POAALLERGEN"/>
</dbReference>
<dbReference type="SUPFAM" id="SSF81736">
    <property type="entry name" value="Group V grass pollen allergen"/>
    <property type="match status" value="2"/>
</dbReference>
<evidence type="ECO:0000255" key="1"/>
<evidence type="ECO:0000305" key="2"/>
<organism>
    <name type="scientific">Phalaris aquatica</name>
    <name type="common">Canary grass</name>
    <dbReference type="NCBI Taxonomy" id="28479"/>
    <lineage>
        <taxon>Eukaryota</taxon>
        <taxon>Viridiplantae</taxon>
        <taxon>Streptophyta</taxon>
        <taxon>Embryophyta</taxon>
        <taxon>Tracheophyta</taxon>
        <taxon>Spermatophyta</taxon>
        <taxon>Magnoliopsida</taxon>
        <taxon>Liliopsida</taxon>
        <taxon>Poales</taxon>
        <taxon>Poaceae</taxon>
        <taxon>BOP clade</taxon>
        <taxon>Pooideae</taxon>
        <taxon>Poodae</taxon>
        <taxon>Poeae</taxon>
        <taxon>Poeae Chloroplast Group 1 (Aveneae type)</taxon>
        <taxon>Phalaridinae</taxon>
        <taxon>Phalaris</taxon>
    </lineage>
</organism>
<protein>
    <recommendedName>
        <fullName>Major pollen allergen Pha a 5.3</fullName>
    </recommendedName>
    <alternativeName>
        <fullName>Allergen Pha a 5</fullName>
    </alternativeName>
    <allergenName>Pha a 5.3</allergenName>
</protein>
<keyword id="KW-0020">Allergen</keyword>
<keyword id="KW-0732">Signal</keyword>
<comment type="allergen">
    <text>Causes an allergic reaction in human. Causes grass pollen allergy.</text>
</comment>
<comment type="similarity">
    <text evidence="2">Belongs to the Poa p IX/Phl p VI allergen family.</text>
</comment>